<dbReference type="EMBL" id="CP000463">
    <property type="protein sequence ID" value="ABJ04317.1"/>
    <property type="molecule type" value="Genomic_DNA"/>
</dbReference>
<dbReference type="SMR" id="Q07UR7"/>
<dbReference type="STRING" id="316055.RPE_0358"/>
<dbReference type="KEGG" id="rpe:RPE_0358"/>
<dbReference type="eggNOG" id="COG0792">
    <property type="taxonomic scope" value="Bacteria"/>
</dbReference>
<dbReference type="HOGENOM" id="CLU_115353_0_2_5"/>
<dbReference type="OrthoDB" id="9812968at2"/>
<dbReference type="GO" id="GO:0003676">
    <property type="term" value="F:nucleic acid binding"/>
    <property type="evidence" value="ECO:0007669"/>
    <property type="project" value="InterPro"/>
</dbReference>
<dbReference type="Gene3D" id="3.40.1350.10">
    <property type="match status" value="1"/>
</dbReference>
<dbReference type="HAMAP" id="MF_00048">
    <property type="entry name" value="UPF0102"/>
    <property type="match status" value="1"/>
</dbReference>
<dbReference type="InterPro" id="IPR011335">
    <property type="entry name" value="Restrct_endonuc-II-like"/>
</dbReference>
<dbReference type="InterPro" id="IPR011856">
    <property type="entry name" value="tRNA_endonuc-like_dom_sf"/>
</dbReference>
<dbReference type="InterPro" id="IPR003509">
    <property type="entry name" value="UPF0102_YraN-like"/>
</dbReference>
<dbReference type="NCBIfam" id="NF009151">
    <property type="entry name" value="PRK12497.1-5"/>
    <property type="match status" value="1"/>
</dbReference>
<dbReference type="NCBIfam" id="TIGR00252">
    <property type="entry name" value="YraN family protein"/>
    <property type="match status" value="1"/>
</dbReference>
<dbReference type="PANTHER" id="PTHR34039">
    <property type="entry name" value="UPF0102 PROTEIN YRAN"/>
    <property type="match status" value="1"/>
</dbReference>
<dbReference type="PANTHER" id="PTHR34039:SF1">
    <property type="entry name" value="UPF0102 PROTEIN YRAN"/>
    <property type="match status" value="1"/>
</dbReference>
<dbReference type="Pfam" id="PF02021">
    <property type="entry name" value="UPF0102"/>
    <property type="match status" value="1"/>
</dbReference>
<dbReference type="SUPFAM" id="SSF52980">
    <property type="entry name" value="Restriction endonuclease-like"/>
    <property type="match status" value="1"/>
</dbReference>
<evidence type="ECO:0000255" key="1">
    <source>
        <dbReference type="HAMAP-Rule" id="MF_00048"/>
    </source>
</evidence>
<organism>
    <name type="scientific">Rhodopseudomonas palustris (strain BisA53)</name>
    <dbReference type="NCBI Taxonomy" id="316055"/>
    <lineage>
        <taxon>Bacteria</taxon>
        <taxon>Pseudomonadati</taxon>
        <taxon>Pseudomonadota</taxon>
        <taxon>Alphaproteobacteria</taxon>
        <taxon>Hyphomicrobiales</taxon>
        <taxon>Nitrobacteraceae</taxon>
        <taxon>Rhodopseudomonas</taxon>
    </lineage>
</organism>
<protein>
    <recommendedName>
        <fullName evidence="1">UPF0102 protein RPE_0358</fullName>
    </recommendedName>
</protein>
<reference key="1">
    <citation type="submission" date="2006-09" db="EMBL/GenBank/DDBJ databases">
        <title>Complete sequence of Rhodopseudomonas palustris BisA53.</title>
        <authorList>
            <consortium name="US DOE Joint Genome Institute"/>
            <person name="Copeland A."/>
            <person name="Lucas S."/>
            <person name="Lapidus A."/>
            <person name="Barry K."/>
            <person name="Detter J.C."/>
            <person name="Glavina del Rio T."/>
            <person name="Hammon N."/>
            <person name="Israni S."/>
            <person name="Dalin E."/>
            <person name="Tice H."/>
            <person name="Pitluck S."/>
            <person name="Chain P."/>
            <person name="Malfatti S."/>
            <person name="Shin M."/>
            <person name="Vergez L."/>
            <person name="Schmutz J."/>
            <person name="Larimer F."/>
            <person name="Land M."/>
            <person name="Hauser L."/>
            <person name="Pelletier D.A."/>
            <person name="Kyrpides N."/>
            <person name="Kim E."/>
            <person name="Harwood C.S."/>
            <person name="Oda Y."/>
            <person name="Richardson P."/>
        </authorList>
    </citation>
    <scope>NUCLEOTIDE SEQUENCE [LARGE SCALE GENOMIC DNA]</scope>
    <source>
        <strain>BisA53</strain>
    </source>
</reference>
<feature type="chain" id="PRO_0000336249" description="UPF0102 protein RPE_0358">
    <location>
        <begin position="1"/>
        <end position="130"/>
    </location>
</feature>
<proteinExistence type="inferred from homology"/>
<gene>
    <name type="ordered locus">RPE_0358</name>
</gene>
<sequence>MAKTNPSPPPAPERIAAFRTGLSAETRAAAYLMAKGYRILARRFRTPYGEIDIVAKKRGLVAFIEVKARAKLDDAAYAVTPRQQQRIVDAASAWLMTHPEHADLELRFDALLIAPRSLPRHLIAAFDAST</sequence>
<accession>Q07UR7</accession>
<comment type="similarity">
    <text evidence="1">Belongs to the UPF0102 family.</text>
</comment>
<name>Y358_RHOP5</name>